<reference key="1">
    <citation type="journal article" date="2009" name="Nature">
        <title>Evolution of pathogenicity and sexual reproduction in eight Candida genomes.</title>
        <authorList>
            <person name="Butler G."/>
            <person name="Rasmussen M.D."/>
            <person name="Lin M.F."/>
            <person name="Santos M.A.S."/>
            <person name="Sakthikumar S."/>
            <person name="Munro C.A."/>
            <person name="Rheinbay E."/>
            <person name="Grabherr M."/>
            <person name="Forche A."/>
            <person name="Reedy J.L."/>
            <person name="Agrafioti I."/>
            <person name="Arnaud M.B."/>
            <person name="Bates S."/>
            <person name="Brown A.J.P."/>
            <person name="Brunke S."/>
            <person name="Costanzo M.C."/>
            <person name="Fitzpatrick D.A."/>
            <person name="de Groot P.W.J."/>
            <person name="Harris D."/>
            <person name="Hoyer L.L."/>
            <person name="Hube B."/>
            <person name="Klis F.M."/>
            <person name="Kodira C."/>
            <person name="Lennard N."/>
            <person name="Logue M.E."/>
            <person name="Martin R."/>
            <person name="Neiman A.M."/>
            <person name="Nikolaou E."/>
            <person name="Quail M.A."/>
            <person name="Quinn J."/>
            <person name="Santos M.C."/>
            <person name="Schmitzberger F.F."/>
            <person name="Sherlock G."/>
            <person name="Shah P."/>
            <person name="Silverstein K.A.T."/>
            <person name="Skrzypek M.S."/>
            <person name="Soll D."/>
            <person name="Staggs R."/>
            <person name="Stansfield I."/>
            <person name="Stumpf M.P.H."/>
            <person name="Sudbery P.E."/>
            <person name="Srikantha T."/>
            <person name="Zeng Q."/>
            <person name="Berman J."/>
            <person name="Berriman M."/>
            <person name="Heitman J."/>
            <person name="Gow N.A.R."/>
            <person name="Lorenz M.C."/>
            <person name="Birren B.W."/>
            <person name="Kellis M."/>
            <person name="Cuomo C.A."/>
        </authorList>
    </citation>
    <scope>NUCLEOTIDE SEQUENCE [LARGE SCALE GENOMIC DNA]</scope>
    <source>
        <strain>ATCC 42720</strain>
    </source>
</reference>
<keyword id="KW-0256">Endoplasmic reticulum</keyword>
<keyword id="KW-0378">Hydrolase</keyword>
<keyword id="KW-0472">Membrane</keyword>
<keyword id="KW-0645">Protease</keyword>
<keyword id="KW-1185">Reference proteome</keyword>
<keyword id="KW-0735">Signal-anchor</keyword>
<keyword id="KW-0812">Transmembrane</keyword>
<keyword id="KW-1133">Transmembrane helix</keyword>
<feature type="chain" id="PRO_0000412324" description="Signal peptidase complex catalytic subunit SEC11">
    <location>
        <begin position="1"/>
        <end position="166"/>
    </location>
</feature>
<feature type="topological domain" description="Cytoplasmic" evidence="3">
    <location>
        <begin position="1"/>
        <end position="9"/>
    </location>
</feature>
<feature type="transmembrane region" description="Helical; Signal-anchor for type II membrane protein" evidence="3">
    <location>
        <begin position="10"/>
        <end position="31"/>
    </location>
</feature>
<feature type="topological domain" description="Lumenal" evidence="3">
    <location>
        <begin position="32"/>
        <end position="166"/>
    </location>
</feature>
<feature type="region of interest" description="C-terminal short (CTS) helix" evidence="2">
    <location>
        <begin position="152"/>
        <end position="163"/>
    </location>
</feature>
<feature type="active site" description="Charge relay system" evidence="1">
    <location>
        <position position="44"/>
    </location>
</feature>
<feature type="active site" description="Charge relay system" evidence="1">
    <location>
        <position position="83"/>
    </location>
</feature>
<feature type="active site" description="Charge relay system" evidence="1">
    <location>
        <position position="108"/>
    </location>
</feature>
<comment type="function">
    <text evidence="1 2">Catalytic component of the signal peptidase complex (SPC) which catalyzes the cleavage of N-terminal signal sequences from nascent proteins as they are translocated into the lumen of the endoplasmic reticulum (By similarity). Specifically cleaves N-terminal signal peptides that contain a hydrophobic alpha-helix (h-region) shorter than 18-20 amino acids (By similarity).</text>
</comment>
<comment type="catalytic activity">
    <reaction evidence="1">
        <text>Cleavage of hydrophobic, N-terminal signal or leader sequences from secreted and periplasmic proteins.</text>
        <dbReference type="EC" id="3.4.21.89"/>
    </reaction>
</comment>
<comment type="subunit">
    <text evidence="1 2">Component of the signal peptidase complex (SPC) composed of a catalytic subunit SEC11 and three accessory subunits SPC1, SPC2 and SPC3 (By similarity). The complex induces a local thinning of the ER membrane which is used to measure the length of the signal peptide (SP) h-region of protein substrates. This ensures the selectivity of the complex towards h-regions shorter than 18-20 amino acids (By similarity). SPC associates with the translocon complex (By similarity).</text>
</comment>
<comment type="subcellular location">
    <subcellularLocation>
        <location evidence="1">Endoplasmic reticulum membrane</location>
        <topology evidence="1">Single-pass type II membrane protein</topology>
    </subcellularLocation>
</comment>
<comment type="domain">
    <text evidence="2">The C-terminal short (CTS) helix is essential for catalytic activity. It may be accommodated as a transmembrane helix in the thinned membrane environment of the complex, similarly to the signal peptide in the complex substrates.</text>
</comment>
<comment type="similarity">
    <text evidence="4">Belongs to the peptidase S26B family.</text>
</comment>
<proteinExistence type="inferred from homology"/>
<name>SEC11_CLAL4</name>
<gene>
    <name type="primary">SEC11</name>
    <name type="ORF">CLUG_03047</name>
</gene>
<organism>
    <name type="scientific">Clavispora lusitaniae (strain ATCC 42720)</name>
    <name type="common">Yeast</name>
    <name type="synonym">Candida lusitaniae</name>
    <dbReference type="NCBI Taxonomy" id="306902"/>
    <lineage>
        <taxon>Eukaryota</taxon>
        <taxon>Fungi</taxon>
        <taxon>Dikarya</taxon>
        <taxon>Ascomycota</taxon>
        <taxon>Saccharomycotina</taxon>
        <taxon>Pichiomycetes</taxon>
        <taxon>Metschnikowiaceae</taxon>
        <taxon>Clavispora</taxon>
    </lineage>
</organism>
<evidence type="ECO:0000250" key="1">
    <source>
        <dbReference type="UniProtKB" id="P15367"/>
    </source>
</evidence>
<evidence type="ECO:0000250" key="2">
    <source>
        <dbReference type="UniProtKB" id="P67812"/>
    </source>
</evidence>
<evidence type="ECO:0000255" key="3"/>
<evidence type="ECO:0000305" key="4"/>
<protein>
    <recommendedName>
        <fullName>Signal peptidase complex catalytic subunit SEC11</fullName>
        <ecNumber evidence="1">3.4.21.89</ecNumber>
    </recommendedName>
    <alternativeName>
        <fullName>Signal peptidase I</fullName>
    </alternativeName>
</protein>
<dbReference type="EC" id="3.4.21.89" evidence="1"/>
<dbReference type="EMBL" id="CH408078">
    <property type="protein sequence ID" value="EEQ38921.1"/>
    <property type="molecule type" value="Genomic_DNA"/>
</dbReference>
<dbReference type="RefSeq" id="XP_002617603.1">
    <property type="nucleotide sequence ID" value="XM_002617557.1"/>
</dbReference>
<dbReference type="SMR" id="C4Y3D4"/>
<dbReference type="FunCoup" id="C4Y3D4">
    <property type="interactions" value="629"/>
</dbReference>
<dbReference type="STRING" id="306902.C4Y3D4"/>
<dbReference type="MEROPS" id="S26.010"/>
<dbReference type="GeneID" id="8498308"/>
<dbReference type="KEGG" id="clu:CLUG_03047"/>
<dbReference type="VEuPathDB" id="FungiDB:CLUG_03047"/>
<dbReference type="HOGENOM" id="CLU_089996_0_0_1"/>
<dbReference type="InParanoid" id="C4Y3D4"/>
<dbReference type="OMA" id="ILMNEYP"/>
<dbReference type="OrthoDB" id="103925at4891"/>
<dbReference type="Proteomes" id="UP000007703">
    <property type="component" value="Unassembled WGS sequence"/>
</dbReference>
<dbReference type="GO" id="GO:0005787">
    <property type="term" value="C:signal peptidase complex"/>
    <property type="evidence" value="ECO:0007669"/>
    <property type="project" value="EnsemblFungi"/>
</dbReference>
<dbReference type="GO" id="GO:0004252">
    <property type="term" value="F:serine-type endopeptidase activity"/>
    <property type="evidence" value="ECO:0007669"/>
    <property type="project" value="UniProtKB-EC"/>
</dbReference>
<dbReference type="GO" id="GO:0045047">
    <property type="term" value="P:protein targeting to ER"/>
    <property type="evidence" value="ECO:0007669"/>
    <property type="project" value="EnsemblFungi"/>
</dbReference>
<dbReference type="GO" id="GO:0006465">
    <property type="term" value="P:signal peptide processing"/>
    <property type="evidence" value="ECO:0007669"/>
    <property type="project" value="EnsemblFungi"/>
</dbReference>
<dbReference type="CDD" id="cd06530">
    <property type="entry name" value="S26_SPase_I"/>
    <property type="match status" value="1"/>
</dbReference>
<dbReference type="InterPro" id="IPR036286">
    <property type="entry name" value="LexA/Signal_pep-like_sf"/>
</dbReference>
<dbReference type="InterPro" id="IPR019756">
    <property type="entry name" value="Pept_S26A_signal_pept_1_Ser-AS"/>
</dbReference>
<dbReference type="InterPro" id="IPR015927">
    <property type="entry name" value="Peptidase_S24_S26A/B/C"/>
</dbReference>
<dbReference type="InterPro" id="IPR019533">
    <property type="entry name" value="Peptidase_S26"/>
</dbReference>
<dbReference type="InterPro" id="IPR001733">
    <property type="entry name" value="Peptidase_S26B"/>
</dbReference>
<dbReference type="NCBIfam" id="TIGR02228">
    <property type="entry name" value="sigpep_I_arch"/>
    <property type="match status" value="1"/>
</dbReference>
<dbReference type="PANTHER" id="PTHR10806">
    <property type="entry name" value="SIGNAL PEPTIDASE COMPLEX CATALYTIC SUBUNIT SEC11"/>
    <property type="match status" value="1"/>
</dbReference>
<dbReference type="PANTHER" id="PTHR10806:SF6">
    <property type="entry name" value="SIGNAL PEPTIDASE COMPLEX CATALYTIC SUBUNIT SEC11"/>
    <property type="match status" value="1"/>
</dbReference>
<dbReference type="Pfam" id="PF00717">
    <property type="entry name" value="Peptidase_S24"/>
    <property type="match status" value="1"/>
</dbReference>
<dbReference type="PRINTS" id="PR00728">
    <property type="entry name" value="SIGNALPTASE"/>
</dbReference>
<dbReference type="SUPFAM" id="SSF51306">
    <property type="entry name" value="LexA/Signal peptidase"/>
    <property type="match status" value="1"/>
</dbReference>
<dbReference type="PROSITE" id="PS00501">
    <property type="entry name" value="SPASE_I_1"/>
    <property type="match status" value="1"/>
</dbReference>
<dbReference type="PROSITE" id="PS00761">
    <property type="entry name" value="SPASE_I_3"/>
    <property type="match status" value="1"/>
</dbReference>
<sequence length="166" mass="18636">MNLRQQLTQLLSIAYVFTSAFVAWKALSIVANSHSPIVVVLSGSMEPAFQRGDILFLWNRDSQAKVGDVVVYEIKGKSIPIVHRVLREHHGKDKQFLLTKGDNNALDDLSLYARKQNYLNQKTDLVGTVKAYLPKVGYVTILLTENMYFRYALLGFMGLSALLSGE</sequence>
<accession>C4Y3D4</accession>